<protein>
    <recommendedName>
        <fullName>NADH-ubiquinone oxidoreductase chain 4L</fullName>
        <ecNumber>7.1.1.2</ecNumber>
    </recommendedName>
    <alternativeName>
        <fullName>NADH dehydrogenase subunit 4L</fullName>
    </alternativeName>
</protein>
<organism>
    <name type="scientific">Ziphius cavirostris</name>
    <name type="common">Cuvier's beaked whale</name>
    <name type="synonym">Goose-beaked whale</name>
    <dbReference type="NCBI Taxonomy" id="9760"/>
    <lineage>
        <taxon>Eukaryota</taxon>
        <taxon>Metazoa</taxon>
        <taxon>Chordata</taxon>
        <taxon>Craniata</taxon>
        <taxon>Vertebrata</taxon>
        <taxon>Euteleostomi</taxon>
        <taxon>Mammalia</taxon>
        <taxon>Eutheria</taxon>
        <taxon>Laurasiatheria</taxon>
        <taxon>Artiodactyla</taxon>
        <taxon>Whippomorpha</taxon>
        <taxon>Cetacea</taxon>
        <taxon>Odontoceti</taxon>
        <taxon>Ziphiidae</taxon>
        <taxon>Ziphius</taxon>
    </lineage>
</organism>
<dbReference type="EC" id="7.1.1.2"/>
<dbReference type="EMBL" id="AY398623">
    <property type="protein sequence ID" value="AAR33053.1"/>
    <property type="molecule type" value="Genomic_DNA"/>
</dbReference>
<dbReference type="RefSeq" id="YP_008081964.1">
    <property type="nucleotide sequence ID" value="NC_021435.1"/>
</dbReference>
<dbReference type="SMR" id="Q69B86"/>
<dbReference type="GeneID" id="15823925"/>
<dbReference type="CTD" id="4539"/>
<dbReference type="GO" id="GO:0005743">
    <property type="term" value="C:mitochondrial inner membrane"/>
    <property type="evidence" value="ECO:0000250"/>
    <property type="project" value="UniProtKB"/>
</dbReference>
<dbReference type="GO" id="GO:0045271">
    <property type="term" value="C:respiratory chain complex I"/>
    <property type="evidence" value="ECO:0000250"/>
    <property type="project" value="UniProtKB"/>
</dbReference>
<dbReference type="GO" id="GO:0008137">
    <property type="term" value="F:NADH dehydrogenase (ubiquinone) activity"/>
    <property type="evidence" value="ECO:0000250"/>
    <property type="project" value="UniProtKB"/>
</dbReference>
<dbReference type="GO" id="GO:0042773">
    <property type="term" value="P:ATP synthesis coupled electron transport"/>
    <property type="evidence" value="ECO:0007669"/>
    <property type="project" value="InterPro"/>
</dbReference>
<dbReference type="FunFam" id="1.10.287.3510:FF:000002">
    <property type="entry name" value="NADH-ubiquinone oxidoreductase chain 4L"/>
    <property type="match status" value="1"/>
</dbReference>
<dbReference type="Gene3D" id="1.10.287.3510">
    <property type="match status" value="1"/>
</dbReference>
<dbReference type="InterPro" id="IPR001133">
    <property type="entry name" value="NADH_UbQ_OxRdtase_chain4L/K"/>
</dbReference>
<dbReference type="InterPro" id="IPR039428">
    <property type="entry name" value="NUOK/Mnh_C1-like"/>
</dbReference>
<dbReference type="PANTHER" id="PTHR11434:SF0">
    <property type="entry name" value="NADH-UBIQUINONE OXIDOREDUCTASE CHAIN 4L"/>
    <property type="match status" value="1"/>
</dbReference>
<dbReference type="PANTHER" id="PTHR11434">
    <property type="entry name" value="NADH-UBIQUINONE OXIDOREDUCTASE SUBUNIT ND4L"/>
    <property type="match status" value="1"/>
</dbReference>
<dbReference type="Pfam" id="PF00420">
    <property type="entry name" value="Oxidored_q2"/>
    <property type="match status" value="1"/>
</dbReference>
<geneLocation type="mitochondrion"/>
<gene>
    <name type="primary">MT-ND4L</name>
    <name type="synonym">MTND4L</name>
    <name type="synonym">NADH4L</name>
    <name type="synonym">ND4L</name>
</gene>
<feature type="chain" id="PRO_0000275153" description="NADH-ubiquinone oxidoreductase chain 4L">
    <location>
        <begin position="1"/>
        <end position="98"/>
    </location>
</feature>
<feature type="transmembrane region" description="Helical" evidence="3">
    <location>
        <begin position="1"/>
        <end position="21"/>
    </location>
</feature>
<feature type="transmembrane region" description="Helical" evidence="3">
    <location>
        <begin position="29"/>
        <end position="49"/>
    </location>
</feature>
<feature type="transmembrane region" description="Helical" evidence="3">
    <location>
        <begin position="61"/>
        <end position="81"/>
    </location>
</feature>
<name>NU4LM_ZIPCA</name>
<keyword id="KW-0249">Electron transport</keyword>
<keyword id="KW-0472">Membrane</keyword>
<keyword id="KW-0496">Mitochondrion</keyword>
<keyword id="KW-0999">Mitochondrion inner membrane</keyword>
<keyword id="KW-0520">NAD</keyword>
<keyword id="KW-0679">Respiratory chain</keyword>
<keyword id="KW-1278">Translocase</keyword>
<keyword id="KW-0812">Transmembrane</keyword>
<keyword id="KW-1133">Transmembrane helix</keyword>
<keyword id="KW-0813">Transport</keyword>
<keyword id="KW-0830">Ubiquinone</keyword>
<comment type="function">
    <text evidence="1">Core subunit of the mitochondrial membrane respiratory chain NADH dehydrogenase (Complex I) which catalyzes electron transfer from NADH through the respiratory chain, using ubiquinone as an electron acceptor. Part of the enzyme membrane arm which is embedded in the lipid bilayer and involved in proton translocation.</text>
</comment>
<comment type="catalytic activity">
    <reaction evidence="1">
        <text>a ubiquinone + NADH + 5 H(+)(in) = a ubiquinol + NAD(+) + 4 H(+)(out)</text>
        <dbReference type="Rhea" id="RHEA:29091"/>
        <dbReference type="Rhea" id="RHEA-COMP:9565"/>
        <dbReference type="Rhea" id="RHEA-COMP:9566"/>
        <dbReference type="ChEBI" id="CHEBI:15378"/>
        <dbReference type="ChEBI" id="CHEBI:16389"/>
        <dbReference type="ChEBI" id="CHEBI:17976"/>
        <dbReference type="ChEBI" id="CHEBI:57540"/>
        <dbReference type="ChEBI" id="CHEBI:57945"/>
        <dbReference type="EC" id="7.1.1.2"/>
    </reaction>
    <physiologicalReaction direction="left-to-right" evidence="1">
        <dbReference type="Rhea" id="RHEA:29092"/>
    </physiologicalReaction>
</comment>
<comment type="subunit">
    <text evidence="2">Core subunit of respiratory chain NADH dehydrogenase (Complex I) which is composed of 45 different subunits.</text>
</comment>
<comment type="subcellular location">
    <subcellularLocation>
        <location evidence="2">Mitochondrion inner membrane</location>
        <topology evidence="3">Multi-pass membrane protein</topology>
    </subcellularLocation>
</comment>
<comment type="similarity">
    <text evidence="4">Belongs to the complex I subunit 4L family.</text>
</comment>
<proteinExistence type="inferred from homology"/>
<sequence length="98" mass="10655">MSLVHMNVIVAFTLSLVGLLMYRSHLMSALLCMEGMMLSLFVLAALTILNSHFTLASMMPIILLVFAACEAAIGLALLVTISNTYGTDYVQNLNLLQC</sequence>
<accession>Q69B86</accession>
<reference key="1">
    <citation type="journal article" date="2004" name="Mol. Phylogenet. Evol.">
        <title>Phylogeny of mysticete whales based on mitochondrial and nuclear data.</title>
        <authorList>
            <person name="Rychel A.L."/>
            <person name="Reeder T.W."/>
            <person name="Berta A."/>
        </authorList>
    </citation>
    <scope>NUCLEOTIDE SEQUENCE [GENOMIC DNA]</scope>
</reference>
<evidence type="ECO:0000250" key="1">
    <source>
        <dbReference type="UniProtKB" id="P03901"/>
    </source>
</evidence>
<evidence type="ECO:0000250" key="2">
    <source>
        <dbReference type="UniProtKB" id="P03902"/>
    </source>
</evidence>
<evidence type="ECO:0000255" key="3"/>
<evidence type="ECO:0000305" key="4"/>